<proteinExistence type="inferred from homology"/>
<reference key="1">
    <citation type="journal article" date="2003" name="Lancet">
        <title>Genome sequence of Vibrio parahaemolyticus: a pathogenic mechanism distinct from that of V. cholerae.</title>
        <authorList>
            <person name="Makino K."/>
            <person name="Oshima K."/>
            <person name="Kurokawa K."/>
            <person name="Yokoyama K."/>
            <person name="Uda T."/>
            <person name="Tagomori K."/>
            <person name="Iijima Y."/>
            <person name="Najima M."/>
            <person name="Nakano M."/>
            <person name="Yamashita A."/>
            <person name="Kubota Y."/>
            <person name="Kimura S."/>
            <person name="Yasunaga T."/>
            <person name="Honda T."/>
            <person name="Shinagawa H."/>
            <person name="Hattori M."/>
            <person name="Iida T."/>
        </authorList>
    </citation>
    <scope>NUCLEOTIDE SEQUENCE [LARGE SCALE GENOMIC DNA]</scope>
    <source>
        <strain>RIMD 2210633</strain>
    </source>
</reference>
<accession>Q87L13</accession>
<name>SYW_VIBPA</name>
<sequence length="338" mass="37648">MSKPIVLSGVQPSGELSIGNYLGALRQWQQMQDDYDCQYCVVDLHAVTVRQDPKALHEATLDALAICLAVGVDPKKSTLFVQSHVPEHAQLGWLLNCYTQMGELSRMTQFKDKSARYANDVNVGLFDYPVLMAADILLYGAHQVPVGSDQKQHLELARDIATRFNNIYSPESPIFTVPEPYIPTVNARVMSLQDATKKMSKSDDNRKNVITLLEEPKSIIKKINKAQTDTETPPSIRHDVENKAGIANLMGLYSAATGMSFEEIEAKYKGVEMYGPFKKDVGEAVVAMLEPIQEEYRRIRADRAFMDEVMKQGAEKASARAAETLKKAYEAVGFVARP</sequence>
<dbReference type="EC" id="6.1.1.2" evidence="1"/>
<dbReference type="EMBL" id="BA000031">
    <property type="protein sequence ID" value="BAC61067.1"/>
    <property type="molecule type" value="Genomic_DNA"/>
</dbReference>
<dbReference type="RefSeq" id="NP_799183.1">
    <property type="nucleotide sequence ID" value="NC_004603.1"/>
</dbReference>
<dbReference type="RefSeq" id="WP_005468382.1">
    <property type="nucleotide sequence ID" value="NC_004603.1"/>
</dbReference>
<dbReference type="SMR" id="Q87L13"/>
<dbReference type="GeneID" id="1190354"/>
<dbReference type="KEGG" id="vpa:VP2804"/>
<dbReference type="PATRIC" id="fig|223926.6.peg.2696"/>
<dbReference type="eggNOG" id="COG0180">
    <property type="taxonomic scope" value="Bacteria"/>
</dbReference>
<dbReference type="HOGENOM" id="CLU_029244_1_1_6"/>
<dbReference type="Proteomes" id="UP000002493">
    <property type="component" value="Chromosome 1"/>
</dbReference>
<dbReference type="GO" id="GO:0005829">
    <property type="term" value="C:cytosol"/>
    <property type="evidence" value="ECO:0007669"/>
    <property type="project" value="TreeGrafter"/>
</dbReference>
<dbReference type="GO" id="GO:0005524">
    <property type="term" value="F:ATP binding"/>
    <property type="evidence" value="ECO:0007669"/>
    <property type="project" value="UniProtKB-UniRule"/>
</dbReference>
<dbReference type="GO" id="GO:0004830">
    <property type="term" value="F:tryptophan-tRNA ligase activity"/>
    <property type="evidence" value="ECO:0007669"/>
    <property type="project" value="UniProtKB-UniRule"/>
</dbReference>
<dbReference type="GO" id="GO:0006436">
    <property type="term" value="P:tryptophanyl-tRNA aminoacylation"/>
    <property type="evidence" value="ECO:0007669"/>
    <property type="project" value="UniProtKB-UniRule"/>
</dbReference>
<dbReference type="CDD" id="cd00806">
    <property type="entry name" value="TrpRS_core"/>
    <property type="match status" value="1"/>
</dbReference>
<dbReference type="FunFam" id="1.10.240.10:FF:000002">
    <property type="entry name" value="Tryptophan--tRNA ligase"/>
    <property type="match status" value="1"/>
</dbReference>
<dbReference type="FunFam" id="3.40.50.620:FF:000024">
    <property type="entry name" value="Tryptophan--tRNA ligase"/>
    <property type="match status" value="1"/>
</dbReference>
<dbReference type="Gene3D" id="3.40.50.620">
    <property type="entry name" value="HUPs"/>
    <property type="match status" value="1"/>
</dbReference>
<dbReference type="Gene3D" id="1.10.240.10">
    <property type="entry name" value="Tyrosyl-Transfer RNA Synthetase"/>
    <property type="match status" value="1"/>
</dbReference>
<dbReference type="HAMAP" id="MF_00140_B">
    <property type="entry name" value="Trp_tRNA_synth_B"/>
    <property type="match status" value="1"/>
</dbReference>
<dbReference type="InterPro" id="IPR002305">
    <property type="entry name" value="aa-tRNA-synth_Ic"/>
</dbReference>
<dbReference type="InterPro" id="IPR014729">
    <property type="entry name" value="Rossmann-like_a/b/a_fold"/>
</dbReference>
<dbReference type="InterPro" id="IPR002306">
    <property type="entry name" value="Trp-tRNA-ligase"/>
</dbReference>
<dbReference type="InterPro" id="IPR024109">
    <property type="entry name" value="Trp-tRNA-ligase_bac-type"/>
</dbReference>
<dbReference type="InterPro" id="IPR050203">
    <property type="entry name" value="Trp-tRNA_synthetase"/>
</dbReference>
<dbReference type="NCBIfam" id="TIGR00233">
    <property type="entry name" value="trpS"/>
    <property type="match status" value="1"/>
</dbReference>
<dbReference type="PANTHER" id="PTHR43766">
    <property type="entry name" value="TRYPTOPHAN--TRNA LIGASE, MITOCHONDRIAL"/>
    <property type="match status" value="1"/>
</dbReference>
<dbReference type="PANTHER" id="PTHR43766:SF1">
    <property type="entry name" value="TRYPTOPHAN--TRNA LIGASE, MITOCHONDRIAL"/>
    <property type="match status" value="1"/>
</dbReference>
<dbReference type="Pfam" id="PF00579">
    <property type="entry name" value="tRNA-synt_1b"/>
    <property type="match status" value="1"/>
</dbReference>
<dbReference type="PRINTS" id="PR01039">
    <property type="entry name" value="TRNASYNTHTRP"/>
</dbReference>
<dbReference type="SUPFAM" id="SSF52374">
    <property type="entry name" value="Nucleotidylyl transferase"/>
    <property type="match status" value="1"/>
</dbReference>
<evidence type="ECO:0000255" key="1">
    <source>
        <dbReference type="HAMAP-Rule" id="MF_00140"/>
    </source>
</evidence>
<comment type="function">
    <text evidence="1">Catalyzes the attachment of tryptophan to tRNA(Trp).</text>
</comment>
<comment type="catalytic activity">
    <reaction evidence="1">
        <text>tRNA(Trp) + L-tryptophan + ATP = L-tryptophyl-tRNA(Trp) + AMP + diphosphate + H(+)</text>
        <dbReference type="Rhea" id="RHEA:24080"/>
        <dbReference type="Rhea" id="RHEA-COMP:9671"/>
        <dbReference type="Rhea" id="RHEA-COMP:9705"/>
        <dbReference type="ChEBI" id="CHEBI:15378"/>
        <dbReference type="ChEBI" id="CHEBI:30616"/>
        <dbReference type="ChEBI" id="CHEBI:33019"/>
        <dbReference type="ChEBI" id="CHEBI:57912"/>
        <dbReference type="ChEBI" id="CHEBI:78442"/>
        <dbReference type="ChEBI" id="CHEBI:78535"/>
        <dbReference type="ChEBI" id="CHEBI:456215"/>
        <dbReference type="EC" id="6.1.1.2"/>
    </reaction>
</comment>
<comment type="subunit">
    <text evidence="1">Homodimer.</text>
</comment>
<comment type="subcellular location">
    <subcellularLocation>
        <location evidence="1">Cytoplasm</location>
    </subcellularLocation>
</comment>
<comment type="similarity">
    <text evidence="1">Belongs to the class-I aminoacyl-tRNA synthetase family.</text>
</comment>
<gene>
    <name evidence="1" type="primary">trpS</name>
    <name type="ordered locus">VP2804</name>
</gene>
<protein>
    <recommendedName>
        <fullName evidence="1">Tryptophan--tRNA ligase</fullName>
        <ecNumber evidence="1">6.1.1.2</ecNumber>
    </recommendedName>
    <alternativeName>
        <fullName evidence="1">Tryptophanyl-tRNA synthetase</fullName>
        <shortName evidence="1">TrpRS</shortName>
    </alternativeName>
</protein>
<organism>
    <name type="scientific">Vibrio parahaemolyticus serotype O3:K6 (strain RIMD 2210633)</name>
    <dbReference type="NCBI Taxonomy" id="223926"/>
    <lineage>
        <taxon>Bacteria</taxon>
        <taxon>Pseudomonadati</taxon>
        <taxon>Pseudomonadota</taxon>
        <taxon>Gammaproteobacteria</taxon>
        <taxon>Vibrionales</taxon>
        <taxon>Vibrionaceae</taxon>
        <taxon>Vibrio</taxon>
    </lineage>
</organism>
<feature type="chain" id="PRO_0000136707" description="Tryptophan--tRNA ligase">
    <location>
        <begin position="1"/>
        <end position="338"/>
    </location>
</feature>
<feature type="short sequence motif" description="'HIGH' region" evidence="1">
    <location>
        <begin position="12"/>
        <end position="20"/>
    </location>
</feature>
<feature type="short sequence motif" description="'KMSKS' region" evidence="1">
    <location>
        <begin position="198"/>
        <end position="202"/>
    </location>
</feature>
<feature type="binding site" evidence="1">
    <location>
        <begin position="11"/>
        <end position="13"/>
    </location>
    <ligand>
        <name>ATP</name>
        <dbReference type="ChEBI" id="CHEBI:30616"/>
    </ligand>
</feature>
<feature type="binding site" evidence="1">
    <location>
        <begin position="19"/>
        <end position="20"/>
    </location>
    <ligand>
        <name>ATP</name>
        <dbReference type="ChEBI" id="CHEBI:30616"/>
    </ligand>
</feature>
<feature type="binding site" evidence="1">
    <location>
        <position position="135"/>
    </location>
    <ligand>
        <name>L-tryptophan</name>
        <dbReference type="ChEBI" id="CHEBI:57912"/>
    </ligand>
</feature>
<feature type="binding site" evidence="1">
    <location>
        <begin position="147"/>
        <end position="149"/>
    </location>
    <ligand>
        <name>ATP</name>
        <dbReference type="ChEBI" id="CHEBI:30616"/>
    </ligand>
</feature>
<feature type="binding site" evidence="1">
    <location>
        <position position="189"/>
    </location>
    <ligand>
        <name>ATP</name>
        <dbReference type="ChEBI" id="CHEBI:30616"/>
    </ligand>
</feature>
<feature type="binding site" evidence="1">
    <location>
        <begin position="198"/>
        <end position="202"/>
    </location>
    <ligand>
        <name>ATP</name>
        <dbReference type="ChEBI" id="CHEBI:30616"/>
    </ligand>
</feature>
<keyword id="KW-0030">Aminoacyl-tRNA synthetase</keyword>
<keyword id="KW-0067">ATP-binding</keyword>
<keyword id="KW-0963">Cytoplasm</keyword>
<keyword id="KW-0436">Ligase</keyword>
<keyword id="KW-0547">Nucleotide-binding</keyword>
<keyword id="KW-0648">Protein biosynthesis</keyword>